<protein>
    <recommendedName>
        <fullName evidence="1">Fluoride-specific ion channel FluC 3</fullName>
    </recommendedName>
</protein>
<proteinExistence type="inferred from homology"/>
<feature type="chain" id="PRO_0000110220" description="Fluoride-specific ion channel FluC 3">
    <location>
        <begin position="1"/>
        <end position="134"/>
    </location>
</feature>
<feature type="transmembrane region" description="Helical" evidence="1">
    <location>
        <begin position="4"/>
        <end position="24"/>
    </location>
</feature>
<feature type="transmembrane region" description="Helical" evidence="1">
    <location>
        <begin position="35"/>
        <end position="55"/>
    </location>
</feature>
<feature type="transmembrane region" description="Helical" evidence="1">
    <location>
        <begin position="67"/>
        <end position="87"/>
    </location>
</feature>
<feature type="transmembrane region" description="Helical" evidence="1">
    <location>
        <begin position="100"/>
        <end position="120"/>
    </location>
</feature>
<feature type="binding site" evidence="1">
    <location>
        <position position="74"/>
    </location>
    <ligand>
        <name>Na(+)</name>
        <dbReference type="ChEBI" id="CHEBI:29101"/>
        <note>structural</note>
    </ligand>
</feature>
<feature type="binding site" evidence="1">
    <location>
        <position position="77"/>
    </location>
    <ligand>
        <name>Na(+)</name>
        <dbReference type="ChEBI" id="CHEBI:29101"/>
        <note>structural</note>
    </ligand>
</feature>
<reference key="1">
    <citation type="journal article" date="2004" name="Proc. Natl. Acad. Sci. U.S.A.">
        <title>Insights into the evolution of Yersinia pestis through whole-genome comparison with Yersinia pseudotuberculosis.</title>
        <authorList>
            <person name="Chain P.S.G."/>
            <person name="Carniel E."/>
            <person name="Larimer F.W."/>
            <person name="Lamerdin J."/>
            <person name="Stoutland P.O."/>
            <person name="Regala W.M."/>
            <person name="Georgescu A.M."/>
            <person name="Vergez L.M."/>
            <person name="Land M.L."/>
            <person name="Motin V.L."/>
            <person name="Brubaker R.R."/>
            <person name="Fowler J."/>
            <person name="Hinnebusch J."/>
            <person name="Marceau M."/>
            <person name="Medigue C."/>
            <person name="Simonet M."/>
            <person name="Chenal-Francisque V."/>
            <person name="Souza B."/>
            <person name="Dacheux D."/>
            <person name="Elliott J.M."/>
            <person name="Derbise A."/>
            <person name="Hauser L.J."/>
            <person name="Garcia E."/>
        </authorList>
    </citation>
    <scope>NUCLEOTIDE SEQUENCE [LARGE SCALE GENOMIC DNA]</scope>
    <source>
        <strain>IP32953</strain>
    </source>
</reference>
<comment type="function">
    <text evidence="1">Fluoride-specific ion channel. Important for reducing fluoride concentration in the cell, thus reducing its toxicity.</text>
</comment>
<comment type="catalytic activity">
    <reaction evidence="1">
        <text>fluoride(in) = fluoride(out)</text>
        <dbReference type="Rhea" id="RHEA:76159"/>
        <dbReference type="ChEBI" id="CHEBI:17051"/>
    </reaction>
    <physiologicalReaction direction="left-to-right" evidence="1">
        <dbReference type="Rhea" id="RHEA:76160"/>
    </physiologicalReaction>
</comment>
<comment type="activity regulation">
    <text evidence="1">Na(+) is not transported, but it plays an essential structural role and its presence is essential for fluoride channel function.</text>
</comment>
<comment type="subcellular location">
    <subcellularLocation>
        <location evidence="1">Cell inner membrane</location>
        <topology evidence="1">Multi-pass membrane protein</topology>
    </subcellularLocation>
</comment>
<comment type="similarity">
    <text evidence="1">Belongs to the fluoride channel Fluc/FEX (TC 1.A.43) family.</text>
</comment>
<name>FLUC3_YERPS</name>
<dbReference type="EMBL" id="BX936398">
    <property type="protein sequence ID" value="CAH22171.1"/>
    <property type="molecule type" value="Genomic_DNA"/>
</dbReference>
<dbReference type="SMR" id="Q667Q9"/>
<dbReference type="KEGG" id="ypo:BZ17_3695"/>
<dbReference type="KEGG" id="yps:YPTB2933"/>
<dbReference type="PATRIC" id="fig|273123.14.peg.3873"/>
<dbReference type="Proteomes" id="UP000001011">
    <property type="component" value="Chromosome"/>
</dbReference>
<dbReference type="GO" id="GO:0005886">
    <property type="term" value="C:plasma membrane"/>
    <property type="evidence" value="ECO:0007669"/>
    <property type="project" value="UniProtKB-SubCell"/>
</dbReference>
<dbReference type="GO" id="GO:0062054">
    <property type="term" value="F:fluoride channel activity"/>
    <property type="evidence" value="ECO:0007669"/>
    <property type="project" value="UniProtKB-UniRule"/>
</dbReference>
<dbReference type="GO" id="GO:0046872">
    <property type="term" value="F:metal ion binding"/>
    <property type="evidence" value="ECO:0007669"/>
    <property type="project" value="UniProtKB-KW"/>
</dbReference>
<dbReference type="GO" id="GO:0140114">
    <property type="term" value="P:cellular detoxification of fluoride"/>
    <property type="evidence" value="ECO:0007669"/>
    <property type="project" value="UniProtKB-UniRule"/>
</dbReference>
<dbReference type="HAMAP" id="MF_00454">
    <property type="entry name" value="FluC"/>
    <property type="match status" value="1"/>
</dbReference>
<dbReference type="InterPro" id="IPR003691">
    <property type="entry name" value="FluC"/>
</dbReference>
<dbReference type="NCBIfam" id="NF002453">
    <property type="entry name" value="PRK01636.1-1"/>
    <property type="match status" value="1"/>
</dbReference>
<dbReference type="NCBIfam" id="NF002456">
    <property type="entry name" value="PRK01636.1-4"/>
    <property type="match status" value="1"/>
</dbReference>
<dbReference type="PANTHER" id="PTHR28259">
    <property type="entry name" value="FLUORIDE EXPORT PROTEIN 1-RELATED"/>
    <property type="match status" value="1"/>
</dbReference>
<dbReference type="PANTHER" id="PTHR28259:SF1">
    <property type="entry name" value="FLUORIDE EXPORT PROTEIN 1-RELATED"/>
    <property type="match status" value="1"/>
</dbReference>
<dbReference type="Pfam" id="PF02537">
    <property type="entry name" value="CRCB"/>
    <property type="match status" value="1"/>
</dbReference>
<accession>Q667Q9</accession>
<evidence type="ECO:0000255" key="1">
    <source>
        <dbReference type="HAMAP-Rule" id="MF_00454"/>
    </source>
</evidence>
<gene>
    <name evidence="1" type="primary">fluC3</name>
    <name evidence="1" type="synonym">crcB3</name>
    <name type="ordered locus">YPTB2933</name>
</gene>
<sequence>MPNLIILVFVGGAFGAMCREFIMLSVPRLADGFPMDIFVANIIAAFLLGLTTSFFKKDKINQYVHLMVGTGIMGGLSTFSSFVFGAVEMMKNPTEVLVSICYLVASLIVGFIAVELGLMIGPKEKPKDPQVASE</sequence>
<keyword id="KW-0997">Cell inner membrane</keyword>
<keyword id="KW-1003">Cell membrane</keyword>
<keyword id="KW-0407">Ion channel</keyword>
<keyword id="KW-0406">Ion transport</keyword>
<keyword id="KW-0472">Membrane</keyword>
<keyword id="KW-0479">Metal-binding</keyword>
<keyword id="KW-0915">Sodium</keyword>
<keyword id="KW-0812">Transmembrane</keyword>
<keyword id="KW-1133">Transmembrane helix</keyword>
<keyword id="KW-0813">Transport</keyword>
<organism>
    <name type="scientific">Yersinia pseudotuberculosis serotype I (strain IP32953)</name>
    <dbReference type="NCBI Taxonomy" id="273123"/>
    <lineage>
        <taxon>Bacteria</taxon>
        <taxon>Pseudomonadati</taxon>
        <taxon>Pseudomonadota</taxon>
        <taxon>Gammaproteobacteria</taxon>
        <taxon>Enterobacterales</taxon>
        <taxon>Yersiniaceae</taxon>
        <taxon>Yersinia</taxon>
    </lineage>
</organism>